<accession>Q8VDS3</accession>
<protein>
    <recommendedName>
        <fullName>Chromobox protein homolog 7</fullName>
    </recommendedName>
</protein>
<name>CBX7_MOUSE</name>
<organism>
    <name type="scientific">Mus musculus</name>
    <name type="common">Mouse</name>
    <dbReference type="NCBI Taxonomy" id="10090"/>
    <lineage>
        <taxon>Eukaryota</taxon>
        <taxon>Metazoa</taxon>
        <taxon>Chordata</taxon>
        <taxon>Craniata</taxon>
        <taxon>Vertebrata</taxon>
        <taxon>Euteleostomi</taxon>
        <taxon>Mammalia</taxon>
        <taxon>Eutheria</taxon>
        <taxon>Euarchontoglires</taxon>
        <taxon>Glires</taxon>
        <taxon>Rodentia</taxon>
        <taxon>Myomorpha</taxon>
        <taxon>Muroidea</taxon>
        <taxon>Muridae</taxon>
        <taxon>Murinae</taxon>
        <taxon>Mus</taxon>
        <taxon>Mus</taxon>
    </lineage>
</organism>
<gene>
    <name type="primary">Cbx7</name>
    <name type="synonym">D15Ertd417e</name>
</gene>
<dbReference type="EMBL" id="AY453793">
    <property type="protein sequence ID" value="AAR26721.1"/>
    <property type="molecule type" value="mRNA"/>
</dbReference>
<dbReference type="EMBL" id="BC021398">
    <property type="protein sequence ID" value="AAH21398.1"/>
    <property type="molecule type" value="mRNA"/>
</dbReference>
<dbReference type="CCDS" id="CCDS37143.1"/>
<dbReference type="RefSeq" id="NP_659060.1">
    <property type="nucleotide sequence ID" value="NM_144811.3"/>
</dbReference>
<dbReference type="PDB" id="2KVM">
    <property type="method" value="NMR"/>
    <property type="chains" value="A=1-71"/>
</dbReference>
<dbReference type="PDB" id="4X3K">
    <property type="method" value="X-ray"/>
    <property type="resolution" value="1.45 A"/>
    <property type="chains" value="A/B=7-66"/>
</dbReference>
<dbReference type="PDB" id="4X3S">
    <property type="method" value="X-ray"/>
    <property type="resolution" value="1.60 A"/>
    <property type="chains" value="A/B=7-66"/>
</dbReference>
<dbReference type="PDB" id="4X3T">
    <property type="method" value="X-ray"/>
    <property type="resolution" value="2.14 A"/>
    <property type="chains" value="A/B/C/D/E/F=7-66"/>
</dbReference>
<dbReference type="PDB" id="4X3U">
    <property type="method" value="X-ray"/>
    <property type="resolution" value="1.63 A"/>
    <property type="chains" value="A/B=7-66"/>
</dbReference>
<dbReference type="PDB" id="5EJW">
    <property type="method" value="X-ray"/>
    <property type="resolution" value="2.60 A"/>
    <property type="chains" value="A=1-71"/>
</dbReference>
<dbReference type="PDBsum" id="2KVM"/>
<dbReference type="PDBsum" id="4X3K"/>
<dbReference type="PDBsum" id="4X3S"/>
<dbReference type="PDBsum" id="4X3T"/>
<dbReference type="PDBsum" id="4X3U"/>
<dbReference type="PDBsum" id="5EJW"/>
<dbReference type="BMRB" id="Q8VDS3"/>
<dbReference type="SMR" id="Q8VDS3"/>
<dbReference type="BioGRID" id="206690">
    <property type="interactions" value="28"/>
</dbReference>
<dbReference type="DIP" id="DIP-38616N"/>
<dbReference type="FunCoup" id="Q8VDS3">
    <property type="interactions" value="1562"/>
</dbReference>
<dbReference type="IntAct" id="Q8VDS3">
    <property type="interactions" value="30"/>
</dbReference>
<dbReference type="STRING" id="10090.ENSMUSP00000105245"/>
<dbReference type="ChEMBL" id="CHEMBL3826868"/>
<dbReference type="iPTMnet" id="Q8VDS3"/>
<dbReference type="PhosphoSitePlus" id="Q8VDS3"/>
<dbReference type="PaxDb" id="10090-ENSMUSP00000105245"/>
<dbReference type="ProteomicsDB" id="279933"/>
<dbReference type="Antibodypedia" id="26564">
    <property type="antibodies" value="133 antibodies from 29 providers"/>
</dbReference>
<dbReference type="DNASU" id="52609"/>
<dbReference type="Ensembl" id="ENSMUST00000109615.8">
    <property type="protein sequence ID" value="ENSMUSP00000105244.2"/>
    <property type="gene ID" value="ENSMUSG00000053411.17"/>
</dbReference>
<dbReference type="Ensembl" id="ENSMUST00000109616.9">
    <property type="protein sequence ID" value="ENSMUSP00000105245.3"/>
    <property type="gene ID" value="ENSMUSG00000053411.17"/>
</dbReference>
<dbReference type="GeneID" id="52609"/>
<dbReference type="KEGG" id="mmu:52609"/>
<dbReference type="UCSC" id="uc007wuv.1">
    <property type="organism name" value="mouse"/>
</dbReference>
<dbReference type="AGR" id="MGI:1196439"/>
<dbReference type="CTD" id="23492"/>
<dbReference type="MGI" id="MGI:1196439">
    <property type="gene designation" value="Cbx7"/>
</dbReference>
<dbReference type="VEuPathDB" id="HostDB:ENSMUSG00000053411"/>
<dbReference type="eggNOG" id="KOG2748">
    <property type="taxonomic scope" value="Eukaryota"/>
</dbReference>
<dbReference type="GeneTree" id="ENSGT00940000158365"/>
<dbReference type="HOGENOM" id="CLU_042051_1_1_1"/>
<dbReference type="InParanoid" id="Q8VDS3"/>
<dbReference type="OrthoDB" id="1918685at2759"/>
<dbReference type="PhylomeDB" id="Q8VDS3"/>
<dbReference type="TreeFam" id="TF106456"/>
<dbReference type="BioGRID-ORCS" id="52609">
    <property type="hits" value="0 hits in 64 CRISPR screens"/>
</dbReference>
<dbReference type="ChiTaRS" id="Cbx7">
    <property type="organism name" value="mouse"/>
</dbReference>
<dbReference type="EvolutionaryTrace" id="Q8VDS3"/>
<dbReference type="PRO" id="PR:Q8VDS3"/>
<dbReference type="Proteomes" id="UP000000589">
    <property type="component" value="Chromosome 15"/>
</dbReference>
<dbReference type="RNAct" id="Q8VDS3">
    <property type="molecule type" value="protein"/>
</dbReference>
<dbReference type="Bgee" id="ENSMUSG00000053411">
    <property type="expression patterns" value="Expressed in yolk sac and 151 other cell types or tissues"/>
</dbReference>
<dbReference type="ExpressionAtlas" id="Q8VDS3">
    <property type="expression patterns" value="baseline and differential"/>
</dbReference>
<dbReference type="GO" id="GO:0000792">
    <property type="term" value="C:heterochromatin"/>
    <property type="evidence" value="ECO:0000314"/>
    <property type="project" value="UniProtKB"/>
</dbReference>
<dbReference type="GO" id="GO:0005634">
    <property type="term" value="C:nucleus"/>
    <property type="evidence" value="ECO:0000314"/>
    <property type="project" value="UniProtKB"/>
</dbReference>
<dbReference type="GO" id="GO:0031519">
    <property type="term" value="C:PcG protein complex"/>
    <property type="evidence" value="ECO:0000250"/>
    <property type="project" value="UniProtKB"/>
</dbReference>
<dbReference type="GO" id="GO:0035102">
    <property type="term" value="C:PRC1 complex"/>
    <property type="evidence" value="ECO:0000314"/>
    <property type="project" value="UniProtKB"/>
</dbReference>
<dbReference type="GO" id="GO:0003682">
    <property type="term" value="F:chromatin binding"/>
    <property type="evidence" value="ECO:0000314"/>
    <property type="project" value="MGI"/>
</dbReference>
<dbReference type="GO" id="GO:0062072">
    <property type="term" value="F:histone H3K9me2/3 reader activity"/>
    <property type="evidence" value="ECO:0000314"/>
    <property type="project" value="UniProtKB"/>
</dbReference>
<dbReference type="GO" id="GO:0003727">
    <property type="term" value="F:single-stranded RNA binding"/>
    <property type="evidence" value="ECO:0000314"/>
    <property type="project" value="UniProtKB"/>
</dbReference>
<dbReference type="GO" id="GO:0048733">
    <property type="term" value="P:sebaceous gland development"/>
    <property type="evidence" value="ECO:0000315"/>
    <property type="project" value="MGI"/>
</dbReference>
<dbReference type="CDD" id="cd18646">
    <property type="entry name" value="CD_Cbx7"/>
    <property type="match status" value="1"/>
</dbReference>
<dbReference type="FunFam" id="2.40.50.40:FF:000006">
    <property type="entry name" value="Chromobox protein homolog 7"/>
    <property type="match status" value="1"/>
</dbReference>
<dbReference type="Gene3D" id="2.40.50.40">
    <property type="match status" value="1"/>
</dbReference>
<dbReference type="InterPro" id="IPR043000">
    <property type="entry name" value="CBX7"/>
</dbReference>
<dbReference type="InterPro" id="IPR033773">
    <property type="entry name" value="CBX7_C"/>
</dbReference>
<dbReference type="InterPro" id="IPR016197">
    <property type="entry name" value="Chromo-like_dom_sf"/>
</dbReference>
<dbReference type="InterPro" id="IPR000953">
    <property type="entry name" value="Chromo/chromo_shadow_dom"/>
</dbReference>
<dbReference type="InterPro" id="IPR017984">
    <property type="entry name" value="Chromo_dom_subgr"/>
</dbReference>
<dbReference type="InterPro" id="IPR023780">
    <property type="entry name" value="Chromo_domain"/>
</dbReference>
<dbReference type="InterPro" id="IPR023779">
    <property type="entry name" value="Chromodomain_CS"/>
</dbReference>
<dbReference type="PANTHER" id="PTHR47277">
    <property type="entry name" value="CHROMOBOX PROTEIN HOMOLOG 7"/>
    <property type="match status" value="1"/>
</dbReference>
<dbReference type="PANTHER" id="PTHR47277:SF1">
    <property type="entry name" value="CHROMOBOX PROTEIN HOMOLOG 7"/>
    <property type="match status" value="1"/>
</dbReference>
<dbReference type="Pfam" id="PF17218">
    <property type="entry name" value="CBX7_C"/>
    <property type="match status" value="1"/>
</dbReference>
<dbReference type="Pfam" id="PF00385">
    <property type="entry name" value="Chromo"/>
    <property type="match status" value="1"/>
</dbReference>
<dbReference type="PRINTS" id="PR00504">
    <property type="entry name" value="CHROMODOMAIN"/>
</dbReference>
<dbReference type="SMART" id="SM00298">
    <property type="entry name" value="CHROMO"/>
    <property type="match status" value="1"/>
</dbReference>
<dbReference type="SUPFAM" id="SSF54160">
    <property type="entry name" value="Chromo domain-like"/>
    <property type="match status" value="1"/>
</dbReference>
<dbReference type="PROSITE" id="PS00598">
    <property type="entry name" value="CHROMO_1"/>
    <property type="match status" value="1"/>
</dbReference>
<dbReference type="PROSITE" id="PS50013">
    <property type="entry name" value="CHROMO_2"/>
    <property type="match status" value="1"/>
</dbReference>
<proteinExistence type="evidence at protein level"/>
<evidence type="ECO:0000250" key="1">
    <source>
        <dbReference type="UniProtKB" id="O95931"/>
    </source>
</evidence>
<evidence type="ECO:0000255" key="2">
    <source>
        <dbReference type="PROSITE-ProRule" id="PRU00053"/>
    </source>
</evidence>
<evidence type="ECO:0000256" key="3">
    <source>
        <dbReference type="SAM" id="MobiDB-lite"/>
    </source>
</evidence>
<evidence type="ECO:0000269" key="4">
    <source>
    </source>
</evidence>
<evidence type="ECO:0000269" key="5">
    <source>
    </source>
</evidence>
<evidence type="ECO:0000269" key="6">
    <source>
    </source>
</evidence>
<evidence type="ECO:0000269" key="7">
    <source>
    </source>
</evidence>
<evidence type="ECO:0007829" key="8">
    <source>
        <dbReference type="PDB" id="2KVM"/>
    </source>
</evidence>
<evidence type="ECO:0007829" key="9">
    <source>
        <dbReference type="PDB" id="4X3K"/>
    </source>
</evidence>
<comment type="function">
    <text evidence="1 4 5 6 7">Component of a Polycomb group (PcG) multiprotein PRC1-like complex, a complex class required to maintain the transcriptionally repressive state of many genes, including Hox genes, throughout development (PubMed:16537902, PubMed:22226355). PcG PRC1 complex acts via chromatin remodeling and modification of histones; it mediates monoubiquitination of histone H2A 'Lys-119', rendering chromatin heritably changed in its expressibility. Promotes histone H3 trimethylation at 'Lys-9' (H3K9me3) (By similarity). Binds to histone H3 trimethylated at 'Lys-9' (H3K9me3) or at 'Lys-27' (H3K27me3) (PubMed:16537902, PubMed:22226355). Trimethylation at 'Lys-27' (H3K27me3) is important for chromatin recruitment (PubMed:16537902, PubMed:22226355). May possibly also bind trimethylated lysine residues in other proteins (in vitro) (PubMed:16537902). Binds non-coding, single-stranded RNA and double-stranded RNA (PubMed:16537902, PubMed:20541999). Plays a role in the timely repression of differentiation-specific genes in pluripotent embryonic stem cells to maintain the undifferentiated state (PubMed:22226355). Regulator of cellular lifespan by maintaining the repression of CDKN2A, but not by inducing telomerase activity (PubMed:14647293).</text>
</comment>
<comment type="subunit">
    <text evidence="1 4 5 7">Component of a PRC1-like complex (PubMed:22226355). Distinct PRC1-like core complexes are composed of a RING1 subunit (RING1B or RING1A), one of the six PCGF proteins (PCGF1-6), one PHC protein (PHC1-3) and one of the CBX proteins (CBX2, CBX4, CBX6, CBX7 or CBX8) (PubMed:22226355). The composition of the PRC1 complex may differ between the PRC1 complex in pluripotent embryonic stem cells containing RNF2, CBX7 and PCGF2, and the PRC1 complex in differentiating cells containing RNF2, CBX2, CBX4 and BMI1 (PubMed:22226355). Interacts with RING1 (PubMed:14647293). Interacts with RNF2, PHC1 and PCGF2 (PubMed:22226355). Interacts (via chromodomain) with histone H3K9Me3 and H3K27me3 (PubMed:16537902). Interacts with H3K9Me2 and H4K20Me1 (PubMed:16537902). Interacts (via chromodomain) with single-stranded and double-stranded RNA; RNA binding seems to be required for the localization to chromatin (PubMed:16537902). Interacts with PCGF1, PCGF3, PCGF5 and PCGF6 (By similarity).</text>
</comment>
<comment type="interaction">
    <interactant intactId="EBI-1216533">
        <id>Q8VDS3</id>
    </interactant>
    <interactant intactId="EBI-1053892">
        <id>Q9NZI8</id>
        <label>IGF2BP1</label>
    </interactant>
    <organismsDiffer>true</organismsDiffer>
    <experiments>2</experiments>
</comment>
<comment type="interaction">
    <interactant intactId="EBI-1216533">
        <id>Q8VDS3</id>
    </interactant>
    <interactant intactId="EBI-1055820">
        <id>Q9HCE1</id>
        <label>MOV10</label>
    </interactant>
    <organismsDiffer>true</organismsDiffer>
    <experiments>4</experiments>
</comment>
<comment type="subcellular location">
    <subcellularLocation>
        <location evidence="4 5 6">Nucleus</location>
    </subcellularLocation>
    <subcellularLocation>
        <location evidence="5 7">Chromosome</location>
    </subcellularLocation>
    <text evidence="5 7">Requires trimethylation at 'Lys-27' (H3K27me3) for the localization to chromatin (PubMed:22226355). Localizes to facultative heterochromatin and to the inactivated X chromosome in females (PubMed:16537902).</text>
</comment>
<comment type="tissue specificity">
    <text evidence="5 7">Expressed in embryonic stem cells.</text>
</comment>
<comment type="developmental stage">
    <text>In embryonic fibroblast cultured in vitro, expression gradually decreases with passage number and totally disappears in senescent cells.</text>
</comment>
<reference key="1">
    <citation type="journal article" date="2004" name="Nat. Cell Biol.">
        <title>Polycomb CBX7 has a unifying role in cellular lifespan.</title>
        <authorList>
            <person name="Gil J."/>
            <person name="Bernard D."/>
            <person name="Martinez D."/>
            <person name="Beach D."/>
        </authorList>
    </citation>
    <scope>NUCLEOTIDE SEQUENCE [MRNA]</scope>
    <scope>FUNCTION</scope>
    <scope>SUBCELLULAR LOCATION</scope>
    <scope>INTERACTION WITH RING1</scope>
    <source>
        <strain>CD-1</strain>
    </source>
</reference>
<reference key="2">
    <citation type="journal article" date="2004" name="Genome Res.">
        <title>The status, quality, and expansion of the NIH full-length cDNA project: the Mammalian Gene Collection (MGC).</title>
        <authorList>
            <consortium name="The MGC Project Team"/>
        </authorList>
    </citation>
    <scope>NUCLEOTIDE SEQUENCE [LARGE SCALE MRNA]</scope>
    <source>
        <tissue>Mammary tumor</tissue>
    </source>
</reference>
<reference key="3">
    <citation type="journal article" date="2006" name="Mol. Cell. Biol.">
        <title>Mouse polycomb proteins bind differentially to methylated histone H3 and RNA and are enriched in facultative heterochromatin.</title>
        <authorList>
            <person name="Bernstein E."/>
            <person name="Duncan E.M."/>
            <person name="Masui O."/>
            <person name="Gil J."/>
            <person name="Heard E."/>
            <person name="Allis C.D."/>
        </authorList>
    </citation>
    <scope>FUNCTION</scope>
    <scope>INTERACTION WITH HISTONE H3K9ME3; H3K27ME3; H3K9ME2; H4K20ME1 AND SSRNA</scope>
    <scope>SUBCELLULAR LOCATION</scope>
    <scope>TISSUE SPECIFICITY</scope>
    <scope>MUTAGENESIS OF PHE-11 AND TRP-35</scope>
</reference>
<reference key="4">
    <citation type="journal article" date="2010" name="Mol. Cell">
        <title>Molecular interplay of the noncoding RNA ANRIL and methylated histone H3 lysine 27 by polycomb CBX7 in transcriptional silencing of INK4a.</title>
        <authorList>
            <person name="Yap K.L."/>
            <person name="Li S."/>
            <person name="Munoz-Cabello A.M."/>
            <person name="Raguz S."/>
            <person name="Zeng L."/>
            <person name="Mujtaba S."/>
            <person name="Gil J."/>
            <person name="Walsh M.J."/>
            <person name="Zhou M.M."/>
        </authorList>
    </citation>
    <scope>STRUCTURE BY NMR OF 1-71 IN COMPLEX WITH HISTONE H3 DIMETHYLATED AT 'LYS-27'</scope>
    <scope>FUNCTION</scope>
    <scope>SUBUNIT</scope>
    <scope>SUBCELLULAR LOCATION</scope>
    <scope>MUTAGENESIS OF ARG-17; LYS-31 AND TRP-35</scope>
</reference>
<reference key="5">
    <citation type="journal article" date="2012" name="Cell Stem Cell">
        <title>Nonoverlapping functions of the Polycomb group Cbx family of proteins in embryonic stem cells.</title>
        <authorList>
            <person name="Morey L."/>
            <person name="Pascual G."/>
            <person name="Cozzuto L."/>
            <person name="Roma G."/>
            <person name="Wutz A."/>
            <person name="Benitah S.A."/>
            <person name="Di Croce L."/>
        </authorList>
    </citation>
    <scope>FUNCTION</scope>
    <scope>INTERACTION WITH RNF2; PHC1 AND PCGF2</scope>
    <scope>TISSUE SPECIFICITY</scope>
</reference>
<sequence length="158" mass="18109">MELSAIGEQVFAVESIRKKRVRKGKVEYLVKWKGWPPKYSTWEPEEHILDPRLVMAYEEKEERDRASGYRKRGPKPRRLLLQESAAPDVVQTPGDWEPMEQAPEEEAEADLTNGPPPWTPTLPSSEVTVTDITANSVTVTFREAQAAEGFFRDRNEKL</sequence>
<feature type="chain" id="PRO_0000080213" description="Chromobox protein homolog 7">
    <location>
        <begin position="1"/>
        <end position="158"/>
    </location>
</feature>
<feature type="domain" description="Chromo" evidence="2">
    <location>
        <begin position="11"/>
        <end position="69"/>
    </location>
</feature>
<feature type="region of interest" description="Disordered" evidence="3">
    <location>
        <begin position="60"/>
        <end position="127"/>
    </location>
</feature>
<feature type="compositionally biased region" description="Basic residues" evidence="3">
    <location>
        <begin position="68"/>
        <end position="78"/>
    </location>
</feature>
<feature type="mutagenesis site" description="Abolishes binding to trimethylated histone H3." evidence="5">
    <original>F</original>
    <variation>A</variation>
    <location>
        <position position="11"/>
    </location>
</feature>
<feature type="mutagenesis site" description="Strongly reduced RNA binding. Prevents cellular senescence and promotes continued cell division." evidence="6">
    <original>R</original>
    <variation>A</variation>
    <variation>Q</variation>
    <location>
        <position position="17"/>
    </location>
</feature>
<feature type="mutagenesis site" description="Strongly reduced RNA binding." evidence="6">
    <original>K</original>
    <variation>A</variation>
    <location>
        <position position="31"/>
    </location>
</feature>
<feature type="mutagenesis site" description="Strongly reduced binding to methylated histone H3 (H3K27me3). Causes premature cellular senescence." evidence="5 6">
    <original>W</original>
    <variation>A</variation>
    <location>
        <position position="35"/>
    </location>
</feature>
<feature type="strand" evidence="8">
    <location>
        <begin position="3"/>
        <end position="5"/>
    </location>
</feature>
<feature type="strand" evidence="9">
    <location>
        <begin position="10"/>
        <end position="22"/>
    </location>
</feature>
<feature type="strand" evidence="9">
    <location>
        <begin position="25"/>
        <end position="32"/>
    </location>
</feature>
<feature type="helix" evidence="9">
    <location>
        <begin position="37"/>
        <end position="39"/>
    </location>
</feature>
<feature type="strand" evidence="9">
    <location>
        <begin position="41"/>
        <end position="44"/>
    </location>
</feature>
<feature type="helix" evidence="9">
    <location>
        <begin position="45"/>
        <end position="47"/>
    </location>
</feature>
<feature type="helix" evidence="9">
    <location>
        <begin position="51"/>
        <end position="65"/>
    </location>
</feature>
<keyword id="KW-0002">3D-structure</keyword>
<keyword id="KW-0156">Chromatin regulator</keyword>
<keyword id="KW-0158">Chromosome</keyword>
<keyword id="KW-0539">Nucleus</keyword>
<keyword id="KW-1185">Reference proteome</keyword>
<keyword id="KW-0678">Repressor</keyword>
<keyword id="KW-0694">RNA-binding</keyword>
<keyword id="KW-0804">Transcription</keyword>
<keyword id="KW-0805">Transcription regulation</keyword>